<reference evidence="4" key="1">
    <citation type="journal article" date="1996" name="Bioorg. Med. Chem.">
        <title>MS-271, a novel inhibitor of calmodulin-activated myosin light chain kinase from Streptomyces sp. -- I. Isolation, structural determination and biological properties of MS-271.</title>
        <authorList>
            <person name="Yano K."/>
            <person name="Toki S."/>
            <person name="Nakanishi S."/>
            <person name="Ochiai K."/>
            <person name="Ando K."/>
            <person name="Yoshida M."/>
            <person name="Matsuda Y."/>
            <person name="Yamasaki M."/>
        </authorList>
    </citation>
    <scope>PROTEIN SEQUENCE</scope>
    <scope>FUNCTION</scope>
    <scope>MASS SPECTROMETRY</scope>
    <scope>D-AMINO ACID AT TRP-21</scope>
    <scope>DISULFIDE BONDS</scope>
    <scope>CROSS-LINK</scope>
    <source>
        <strain evidence="1">M-271</strain>
    </source>
</reference>
<reference evidence="4" key="2">
    <citation type="journal article" date="1996" name="Bioorg. Med. Chem.">
        <title>MS-271, a novel inhibitor of calmodulin-activated myosin light chain kinase from Streptomyces sp. -- II. Solution structure of MS-271: characteristic features of the 'lasso' structure.</title>
        <authorList>
            <person name="Katahira R."/>
            <person name="Yamasaki M."/>
            <person name="Matsuda Y."/>
            <person name="Yoshida M."/>
        </authorList>
    </citation>
    <scope>STRUCTURE BY NMR OF 1-21</scope>
</reference>
<comment type="function">
    <text evidence="1">Inhibits chicken myosin light chain kinase with an IC(50) of 8 M. Does not inhibit bovine cAMP-dependent protein kinase or rat protein kinase C. Antibacterial activity against the Gram-positive bacteria B.subtilis, E.faecium and S.aureus. No antibacterial activity against the Gram-negative bacteria E.coli, K.pneumoniae, P.aeruginosa, P.vulgaris, S.sonnei and S.typhosa. No antifungal activity against C.albicans.</text>
</comment>
<comment type="mass spectrometry" mass="2168.8596" method="FAB" evidence="1"/>
<dbReference type="PDB" id="8GQA">
    <property type="method" value="X-ray"/>
    <property type="resolution" value="2.29 A"/>
    <property type="chains" value="B=1-20"/>
</dbReference>
<dbReference type="PDBsum" id="8GQA"/>
<dbReference type="SMR" id="P85078"/>
<dbReference type="GO" id="GO:0004860">
    <property type="term" value="F:protein kinase inhibitor activity"/>
    <property type="evidence" value="ECO:0007669"/>
    <property type="project" value="UniProtKB-KW"/>
</dbReference>
<dbReference type="GO" id="GO:0050830">
    <property type="term" value="P:defense response to Gram-positive bacterium"/>
    <property type="evidence" value="ECO:0000314"/>
    <property type="project" value="UniProtKB"/>
</dbReference>
<dbReference type="GO" id="GO:0006469">
    <property type="term" value="P:negative regulation of protein kinase activity"/>
    <property type="evidence" value="ECO:0000314"/>
    <property type="project" value="UniProtKB"/>
</dbReference>
<sequence length="21" mass="2186">CLGVGSCNDFAGCGYAIVCFW</sequence>
<accession>P85078</accession>
<keyword id="KW-0002">3D-structure</keyword>
<keyword id="KW-0044">Antibiotic</keyword>
<keyword id="KW-0929">Antimicrobial</keyword>
<keyword id="KW-0208">D-amino acid</keyword>
<keyword id="KW-0903">Direct protein sequencing</keyword>
<keyword id="KW-1015">Disulfide bond</keyword>
<keyword id="KW-0649">Protein kinase inhibitor</keyword>
<keyword id="KW-0883">Thioether bond</keyword>
<protein>
    <recommendedName>
        <fullName evidence="2 3">Tricyclic peptide MS-271</fullName>
    </recommendedName>
    <alternativeName>
        <fullName evidence="4">Class I lasso peptide</fullName>
    </alternativeName>
</protein>
<feature type="peptide" id="PRO_0000278145" description="Tricyclic peptide MS-271" evidence="1">
    <location>
        <begin position="1"/>
        <end position="21"/>
    </location>
</feature>
<feature type="modified residue" description="D-tryptophan" evidence="1">
    <location>
        <position position="21"/>
    </location>
</feature>
<feature type="disulfide bond" evidence="1">
    <location>
        <begin position="1"/>
        <end position="13"/>
    </location>
</feature>
<feature type="disulfide bond" evidence="1">
    <location>
        <begin position="7"/>
        <end position="19"/>
    </location>
</feature>
<feature type="cross-link" description="3-cysteinyl-aspartic acid (Cys-Asp)" evidence="1">
    <location>
        <begin position="1"/>
        <end position="9"/>
    </location>
</feature>
<feature type="turn" evidence="5">
    <location>
        <begin position="14"/>
        <end position="16"/>
    </location>
</feature>
<name>3CP2_STRSQ</name>
<evidence type="ECO:0000269" key="1">
    <source>
    </source>
</evidence>
<evidence type="ECO:0000303" key="2">
    <source>
    </source>
</evidence>
<evidence type="ECO:0000303" key="3">
    <source>
    </source>
</evidence>
<evidence type="ECO:0000305" key="4"/>
<evidence type="ECO:0007829" key="5">
    <source>
        <dbReference type="PDB" id="8GQA"/>
    </source>
</evidence>
<organism>
    <name type="scientific">Streptomyces sp</name>
    <dbReference type="NCBI Taxonomy" id="1931"/>
    <lineage>
        <taxon>Bacteria</taxon>
        <taxon>Bacillati</taxon>
        <taxon>Actinomycetota</taxon>
        <taxon>Actinomycetes</taxon>
        <taxon>Kitasatosporales</taxon>
        <taxon>Streptomycetaceae</taxon>
        <taxon>Streptomyces</taxon>
    </lineage>
</organism>
<proteinExistence type="evidence at protein level"/>